<feature type="chain" id="PRO_1000084522" description="Ribosome maturation factor RimP">
    <location>
        <begin position="1"/>
        <end position="153"/>
    </location>
</feature>
<accession>A9KBL9</accession>
<protein>
    <recommendedName>
        <fullName evidence="1">Ribosome maturation factor RimP</fullName>
    </recommendedName>
</protein>
<organism>
    <name type="scientific">Coxiella burnetii (strain Dugway 5J108-111)</name>
    <dbReference type="NCBI Taxonomy" id="434922"/>
    <lineage>
        <taxon>Bacteria</taxon>
        <taxon>Pseudomonadati</taxon>
        <taxon>Pseudomonadota</taxon>
        <taxon>Gammaproteobacteria</taxon>
        <taxon>Legionellales</taxon>
        <taxon>Coxiellaceae</taxon>
        <taxon>Coxiella</taxon>
    </lineage>
</organism>
<dbReference type="EMBL" id="CP000733">
    <property type="protein sequence ID" value="ABS77646.1"/>
    <property type="molecule type" value="Genomic_DNA"/>
</dbReference>
<dbReference type="RefSeq" id="WP_011996623.1">
    <property type="nucleotide sequence ID" value="NC_009727.1"/>
</dbReference>
<dbReference type="SMR" id="A9KBL9"/>
<dbReference type="KEGG" id="cbd:CBUD_0561"/>
<dbReference type="HOGENOM" id="CLU_070525_1_1_6"/>
<dbReference type="Proteomes" id="UP000008555">
    <property type="component" value="Chromosome"/>
</dbReference>
<dbReference type="GO" id="GO:0005829">
    <property type="term" value="C:cytosol"/>
    <property type="evidence" value="ECO:0007669"/>
    <property type="project" value="TreeGrafter"/>
</dbReference>
<dbReference type="GO" id="GO:0000028">
    <property type="term" value="P:ribosomal small subunit assembly"/>
    <property type="evidence" value="ECO:0007669"/>
    <property type="project" value="TreeGrafter"/>
</dbReference>
<dbReference type="GO" id="GO:0006412">
    <property type="term" value="P:translation"/>
    <property type="evidence" value="ECO:0007669"/>
    <property type="project" value="TreeGrafter"/>
</dbReference>
<dbReference type="CDD" id="cd01734">
    <property type="entry name" value="YlxS_C"/>
    <property type="match status" value="1"/>
</dbReference>
<dbReference type="FunFam" id="3.30.300.70:FF:000001">
    <property type="entry name" value="Ribosome maturation factor RimP"/>
    <property type="match status" value="1"/>
</dbReference>
<dbReference type="Gene3D" id="2.30.30.180">
    <property type="entry name" value="Ribosome maturation factor RimP, C-terminal domain"/>
    <property type="match status" value="1"/>
</dbReference>
<dbReference type="Gene3D" id="3.30.300.70">
    <property type="entry name" value="RimP-like superfamily, N-terminal"/>
    <property type="match status" value="1"/>
</dbReference>
<dbReference type="HAMAP" id="MF_01077">
    <property type="entry name" value="RimP"/>
    <property type="match status" value="1"/>
</dbReference>
<dbReference type="InterPro" id="IPR003728">
    <property type="entry name" value="Ribosome_maturation_RimP"/>
</dbReference>
<dbReference type="InterPro" id="IPR028998">
    <property type="entry name" value="RimP_C"/>
</dbReference>
<dbReference type="InterPro" id="IPR036847">
    <property type="entry name" value="RimP_C_sf"/>
</dbReference>
<dbReference type="InterPro" id="IPR028989">
    <property type="entry name" value="RimP_N"/>
</dbReference>
<dbReference type="InterPro" id="IPR035956">
    <property type="entry name" value="RimP_N_sf"/>
</dbReference>
<dbReference type="NCBIfam" id="NF000927">
    <property type="entry name" value="PRK00092.1-1"/>
    <property type="match status" value="1"/>
</dbReference>
<dbReference type="PANTHER" id="PTHR33867">
    <property type="entry name" value="RIBOSOME MATURATION FACTOR RIMP"/>
    <property type="match status" value="1"/>
</dbReference>
<dbReference type="PANTHER" id="PTHR33867:SF1">
    <property type="entry name" value="RIBOSOME MATURATION FACTOR RIMP"/>
    <property type="match status" value="1"/>
</dbReference>
<dbReference type="Pfam" id="PF17384">
    <property type="entry name" value="DUF150_C"/>
    <property type="match status" value="1"/>
</dbReference>
<dbReference type="Pfam" id="PF02576">
    <property type="entry name" value="RimP_N"/>
    <property type="match status" value="1"/>
</dbReference>
<dbReference type="SUPFAM" id="SSF74942">
    <property type="entry name" value="YhbC-like, C-terminal domain"/>
    <property type="match status" value="1"/>
</dbReference>
<dbReference type="SUPFAM" id="SSF75420">
    <property type="entry name" value="YhbC-like, N-terminal domain"/>
    <property type="match status" value="1"/>
</dbReference>
<sequence>MSQARTLHRLIAPAVEALGFELVGCELFRRGATRILQVFVDKPGGIGLDECAKVSRQISAVLDVEDPIRGRYTLEVSSPGLERPLYTANHYRRFIGNKAKIRLREPREGQRQFRGMIVAVDNEEQVTLQLDNKILKVPLGEIEKANLIADFEG</sequence>
<evidence type="ECO:0000255" key="1">
    <source>
        <dbReference type="HAMAP-Rule" id="MF_01077"/>
    </source>
</evidence>
<name>RIMP_COXBN</name>
<comment type="function">
    <text evidence="1">Required for maturation of 30S ribosomal subunits.</text>
</comment>
<comment type="subcellular location">
    <subcellularLocation>
        <location evidence="1">Cytoplasm</location>
    </subcellularLocation>
</comment>
<comment type="similarity">
    <text evidence="1">Belongs to the RimP family.</text>
</comment>
<reference key="1">
    <citation type="journal article" date="2009" name="Infect. Immun.">
        <title>Comparative genomics reveal extensive transposon-mediated genomic plasticity and diversity among potential effector proteins within the genus Coxiella.</title>
        <authorList>
            <person name="Beare P.A."/>
            <person name="Unsworth N."/>
            <person name="Andoh M."/>
            <person name="Voth D.E."/>
            <person name="Omsland A."/>
            <person name="Gilk S.D."/>
            <person name="Williams K.P."/>
            <person name="Sobral B.W."/>
            <person name="Kupko J.J. III"/>
            <person name="Porcella S.F."/>
            <person name="Samuel J.E."/>
            <person name="Heinzen R.A."/>
        </authorList>
    </citation>
    <scope>NUCLEOTIDE SEQUENCE [LARGE SCALE GENOMIC DNA]</scope>
    <source>
        <strain>Dugway 5J108-111</strain>
    </source>
</reference>
<proteinExistence type="inferred from homology"/>
<gene>
    <name evidence="1" type="primary">rimP</name>
    <name type="ordered locus">CBUD_0561</name>
</gene>
<keyword id="KW-0963">Cytoplasm</keyword>
<keyword id="KW-0690">Ribosome biogenesis</keyword>